<keyword id="KW-0066">ATP synthesis</keyword>
<keyword id="KW-0997">Cell inner membrane</keyword>
<keyword id="KW-1003">Cell membrane</keyword>
<keyword id="KW-0138">CF(0)</keyword>
<keyword id="KW-0375">Hydrogen ion transport</keyword>
<keyword id="KW-0406">Ion transport</keyword>
<keyword id="KW-0446">Lipid-binding</keyword>
<keyword id="KW-0472">Membrane</keyword>
<keyword id="KW-0812">Transmembrane</keyword>
<keyword id="KW-1133">Transmembrane helix</keyword>
<keyword id="KW-0813">Transport</keyword>
<name>ATPL_ECO8A</name>
<gene>
    <name evidence="1" type="primary">atpE</name>
    <name type="ordered locus">ECIAI1_3921</name>
</gene>
<reference key="1">
    <citation type="journal article" date="2009" name="PLoS Genet.">
        <title>Organised genome dynamics in the Escherichia coli species results in highly diverse adaptive paths.</title>
        <authorList>
            <person name="Touchon M."/>
            <person name="Hoede C."/>
            <person name="Tenaillon O."/>
            <person name="Barbe V."/>
            <person name="Baeriswyl S."/>
            <person name="Bidet P."/>
            <person name="Bingen E."/>
            <person name="Bonacorsi S."/>
            <person name="Bouchier C."/>
            <person name="Bouvet O."/>
            <person name="Calteau A."/>
            <person name="Chiapello H."/>
            <person name="Clermont O."/>
            <person name="Cruveiller S."/>
            <person name="Danchin A."/>
            <person name="Diard M."/>
            <person name="Dossat C."/>
            <person name="Karoui M.E."/>
            <person name="Frapy E."/>
            <person name="Garry L."/>
            <person name="Ghigo J.M."/>
            <person name="Gilles A.M."/>
            <person name="Johnson J."/>
            <person name="Le Bouguenec C."/>
            <person name="Lescat M."/>
            <person name="Mangenot S."/>
            <person name="Martinez-Jehanne V."/>
            <person name="Matic I."/>
            <person name="Nassif X."/>
            <person name="Oztas S."/>
            <person name="Petit M.A."/>
            <person name="Pichon C."/>
            <person name="Rouy Z."/>
            <person name="Ruf C.S."/>
            <person name="Schneider D."/>
            <person name="Tourret J."/>
            <person name="Vacherie B."/>
            <person name="Vallenet D."/>
            <person name="Medigue C."/>
            <person name="Rocha E.P.C."/>
            <person name="Denamur E."/>
        </authorList>
    </citation>
    <scope>NUCLEOTIDE SEQUENCE [LARGE SCALE GENOMIC DNA]</scope>
    <source>
        <strain>IAI1</strain>
    </source>
</reference>
<comment type="function">
    <text evidence="1">F(1)F(0) ATP synthase produces ATP from ADP in the presence of a proton or sodium gradient. F-type ATPases consist of two structural domains, F(1) containing the extramembraneous catalytic core and F(0) containing the membrane proton channel, linked together by a central stalk and a peripheral stalk. During catalysis, ATP synthesis in the catalytic domain of F(1) is coupled via a rotary mechanism of the central stalk subunits to proton translocation.</text>
</comment>
<comment type="function">
    <text evidence="1">Key component of the F(0) channel; it plays a direct role in translocation across the membrane. A homomeric c-ring of between 10-14 subunits forms the central stalk rotor element with the F(1) delta and epsilon subunits.</text>
</comment>
<comment type="subunit">
    <text evidence="1">F-type ATPases have 2 components, F(1) - the catalytic core - and F(0) - the membrane proton channel. F(1) has five subunits: alpha(3), beta(3), gamma(1), delta(1), epsilon(1). F(0) has three main subunits: a(1), b(2) and c(10-14). The alpha and beta chains form an alternating ring which encloses part of the gamma chain. F(1) is attached to F(0) by a central stalk formed by the gamma and epsilon chains, while a peripheral stalk is formed by the delta and b chains.</text>
</comment>
<comment type="subcellular location">
    <subcellularLocation>
        <location evidence="1">Cell inner membrane</location>
        <topology evidence="1">Multi-pass membrane protein</topology>
    </subcellularLocation>
</comment>
<comment type="similarity">
    <text evidence="1">Belongs to the ATPase C chain family.</text>
</comment>
<sequence>MENLNMDLLYMAAAVMMGLAAIGAAIGIGILGGKFLEGAARQPDLIPLLRTQFFIVMGLVDAIPMIAVGLGLYVMFAVA</sequence>
<proteinExistence type="inferred from homology"/>
<accession>B7M593</accession>
<dbReference type="EMBL" id="CU928160">
    <property type="protein sequence ID" value="CAR00715.1"/>
    <property type="molecule type" value="Genomic_DNA"/>
</dbReference>
<dbReference type="RefSeq" id="WP_000429386.1">
    <property type="nucleotide sequence ID" value="NC_011741.1"/>
</dbReference>
<dbReference type="SMR" id="B7M593"/>
<dbReference type="GeneID" id="98390858"/>
<dbReference type="KEGG" id="ecr:ECIAI1_3921"/>
<dbReference type="HOGENOM" id="CLU_148047_1_0_6"/>
<dbReference type="GO" id="GO:0005886">
    <property type="term" value="C:plasma membrane"/>
    <property type="evidence" value="ECO:0007669"/>
    <property type="project" value="UniProtKB-SubCell"/>
</dbReference>
<dbReference type="GO" id="GO:0045259">
    <property type="term" value="C:proton-transporting ATP synthase complex"/>
    <property type="evidence" value="ECO:0007669"/>
    <property type="project" value="UniProtKB-KW"/>
</dbReference>
<dbReference type="GO" id="GO:0033177">
    <property type="term" value="C:proton-transporting two-sector ATPase complex, proton-transporting domain"/>
    <property type="evidence" value="ECO:0007669"/>
    <property type="project" value="InterPro"/>
</dbReference>
<dbReference type="GO" id="GO:0008289">
    <property type="term" value="F:lipid binding"/>
    <property type="evidence" value="ECO:0007669"/>
    <property type="project" value="UniProtKB-KW"/>
</dbReference>
<dbReference type="GO" id="GO:0046933">
    <property type="term" value="F:proton-transporting ATP synthase activity, rotational mechanism"/>
    <property type="evidence" value="ECO:0007669"/>
    <property type="project" value="UniProtKB-UniRule"/>
</dbReference>
<dbReference type="CDD" id="cd18185">
    <property type="entry name" value="ATP-synt_Fo_c_ATPE"/>
    <property type="match status" value="1"/>
</dbReference>
<dbReference type="FunFam" id="1.20.20.10:FF:000002">
    <property type="entry name" value="ATP synthase subunit c"/>
    <property type="match status" value="1"/>
</dbReference>
<dbReference type="Gene3D" id="1.20.20.10">
    <property type="entry name" value="F1F0 ATP synthase subunit C"/>
    <property type="match status" value="1"/>
</dbReference>
<dbReference type="HAMAP" id="MF_01396">
    <property type="entry name" value="ATP_synth_c_bact"/>
    <property type="match status" value="1"/>
</dbReference>
<dbReference type="InterPro" id="IPR005953">
    <property type="entry name" value="ATP_synth_csu_bac/chlpt"/>
</dbReference>
<dbReference type="InterPro" id="IPR000454">
    <property type="entry name" value="ATP_synth_F0_csu"/>
</dbReference>
<dbReference type="InterPro" id="IPR020537">
    <property type="entry name" value="ATP_synth_F0_csu_DDCD_BS"/>
</dbReference>
<dbReference type="InterPro" id="IPR038662">
    <property type="entry name" value="ATP_synth_F0_csu_sf"/>
</dbReference>
<dbReference type="InterPro" id="IPR002379">
    <property type="entry name" value="ATPase_proteolipid_c-like_dom"/>
</dbReference>
<dbReference type="InterPro" id="IPR035921">
    <property type="entry name" value="F/V-ATP_Csub_sf"/>
</dbReference>
<dbReference type="NCBIfam" id="TIGR01260">
    <property type="entry name" value="ATP_synt_c"/>
    <property type="match status" value="1"/>
</dbReference>
<dbReference type="NCBIfam" id="NF005363">
    <property type="entry name" value="PRK06876.1"/>
    <property type="match status" value="1"/>
</dbReference>
<dbReference type="Pfam" id="PF00137">
    <property type="entry name" value="ATP-synt_C"/>
    <property type="match status" value="1"/>
</dbReference>
<dbReference type="PRINTS" id="PR00124">
    <property type="entry name" value="ATPASEC"/>
</dbReference>
<dbReference type="SUPFAM" id="SSF81333">
    <property type="entry name" value="F1F0 ATP synthase subunit C"/>
    <property type="match status" value="1"/>
</dbReference>
<dbReference type="PROSITE" id="PS00605">
    <property type="entry name" value="ATPASE_C"/>
    <property type="match status" value="1"/>
</dbReference>
<protein>
    <recommendedName>
        <fullName evidence="1">ATP synthase subunit c</fullName>
    </recommendedName>
    <alternativeName>
        <fullName evidence="1">ATP synthase F(0) sector subunit c</fullName>
    </alternativeName>
    <alternativeName>
        <fullName evidence="1">F-type ATPase subunit c</fullName>
        <shortName evidence="1">F-ATPase subunit c</shortName>
    </alternativeName>
    <alternativeName>
        <fullName evidence="1">Lipid-binding protein</fullName>
    </alternativeName>
</protein>
<evidence type="ECO:0000255" key="1">
    <source>
        <dbReference type="HAMAP-Rule" id="MF_01396"/>
    </source>
</evidence>
<feature type="chain" id="PRO_1000184367" description="ATP synthase subunit c">
    <location>
        <begin position="1"/>
        <end position="79"/>
    </location>
</feature>
<feature type="transmembrane region" description="Helical" evidence="1">
    <location>
        <begin position="11"/>
        <end position="31"/>
    </location>
</feature>
<feature type="transmembrane region" description="Helical" evidence="1">
    <location>
        <begin position="53"/>
        <end position="73"/>
    </location>
</feature>
<feature type="site" description="Reversibly protonated during proton transport" evidence="1">
    <location>
        <position position="61"/>
    </location>
</feature>
<organism>
    <name type="scientific">Escherichia coli O8 (strain IAI1)</name>
    <dbReference type="NCBI Taxonomy" id="585034"/>
    <lineage>
        <taxon>Bacteria</taxon>
        <taxon>Pseudomonadati</taxon>
        <taxon>Pseudomonadota</taxon>
        <taxon>Gammaproteobacteria</taxon>
        <taxon>Enterobacterales</taxon>
        <taxon>Enterobacteriaceae</taxon>
        <taxon>Escherichia</taxon>
    </lineage>
</organism>